<accession>P01632</accession>
<evidence type="ECO:0000255" key="1">
    <source>
        <dbReference type="PROSITE-ProRule" id="PRU00114"/>
    </source>
</evidence>
<comment type="function">
    <text>Anti-phosphocholine antibody.</text>
</comment>
<dbReference type="EMBL" id="U29423">
    <property type="protein sequence ID" value="AAC00033.1"/>
    <property type="molecule type" value="mRNA"/>
</dbReference>
<dbReference type="PIR" id="A01915">
    <property type="entry name" value="KVMS7A"/>
</dbReference>
<dbReference type="PIR" id="A30534">
    <property type="entry name" value="A30534"/>
</dbReference>
<dbReference type="PIR" id="C30534">
    <property type="entry name" value="C30534"/>
</dbReference>
<dbReference type="PIR" id="F30534">
    <property type="entry name" value="F30534"/>
</dbReference>
<dbReference type="PIR" id="H30534">
    <property type="entry name" value="H30534"/>
</dbReference>
<dbReference type="PIR" id="I30534">
    <property type="entry name" value="I30534"/>
</dbReference>
<dbReference type="EMDB" id="EMD-0897"/>
<dbReference type="EMDB" id="EMD-22699"/>
<dbReference type="EMDB" id="EMD-25487"/>
<dbReference type="EMDB" id="EMD-25488"/>
<dbReference type="EMDB" id="EMD-32676"/>
<dbReference type="EMDB" id="EMD-32678"/>
<dbReference type="EMDB" id="EMD-33994"/>
<dbReference type="EMDB" id="EMD-34231"/>
<dbReference type="EMDB" id="EMD-34232"/>
<dbReference type="EMDB" id="EMD-34233"/>
<dbReference type="EMDB" id="EMD-34234"/>
<dbReference type="EMDB" id="EMD-37306"/>
<dbReference type="EMDB" id="EMD-7136"/>
<dbReference type="EMDB" id="EMD-9634"/>
<dbReference type="SMR" id="P01632"/>
<dbReference type="FunCoup" id="P01632">
    <property type="interactions" value="694"/>
</dbReference>
<dbReference type="ProteomicsDB" id="263682"/>
<dbReference type="AGR" id="MGI:3577282"/>
<dbReference type="MGI" id="MGI:3577282">
    <property type="gene designation" value="Igkv7-33"/>
</dbReference>
<dbReference type="InParanoid" id="P01632"/>
<dbReference type="PRO" id="PR:P01632"/>
<dbReference type="Proteomes" id="UP000000589">
    <property type="component" value="Unplaced"/>
</dbReference>
<dbReference type="RNAct" id="P01632">
    <property type="molecule type" value="protein"/>
</dbReference>
<dbReference type="GO" id="GO:0019814">
    <property type="term" value="C:immunoglobulin complex"/>
    <property type="evidence" value="ECO:0007669"/>
    <property type="project" value="UniProtKB-KW"/>
</dbReference>
<dbReference type="GO" id="GO:0002250">
    <property type="term" value="P:adaptive immune response"/>
    <property type="evidence" value="ECO:0007669"/>
    <property type="project" value="UniProtKB-KW"/>
</dbReference>
<dbReference type="CDD" id="cd04980">
    <property type="entry name" value="IgV_L_kappa"/>
    <property type="match status" value="1"/>
</dbReference>
<dbReference type="FunFam" id="2.60.40.10:FF:001378">
    <property type="entry name" value="Immunoglobulin kappa variable 4-1"/>
    <property type="match status" value="1"/>
</dbReference>
<dbReference type="Gene3D" id="2.60.40.10">
    <property type="entry name" value="Immunoglobulins"/>
    <property type="match status" value="1"/>
</dbReference>
<dbReference type="InterPro" id="IPR007110">
    <property type="entry name" value="Ig-like_dom"/>
</dbReference>
<dbReference type="InterPro" id="IPR036179">
    <property type="entry name" value="Ig-like_dom_sf"/>
</dbReference>
<dbReference type="InterPro" id="IPR013783">
    <property type="entry name" value="Ig-like_fold"/>
</dbReference>
<dbReference type="InterPro" id="IPR003599">
    <property type="entry name" value="Ig_sub"/>
</dbReference>
<dbReference type="InterPro" id="IPR013106">
    <property type="entry name" value="Ig_V-set"/>
</dbReference>
<dbReference type="InterPro" id="IPR050150">
    <property type="entry name" value="IgV_Light_Chain"/>
</dbReference>
<dbReference type="PANTHER" id="PTHR23267">
    <property type="entry name" value="IMMUNOGLOBULIN LIGHT CHAIN"/>
    <property type="match status" value="1"/>
</dbReference>
<dbReference type="Pfam" id="PF07686">
    <property type="entry name" value="V-set"/>
    <property type="match status" value="1"/>
</dbReference>
<dbReference type="SMART" id="SM00409">
    <property type="entry name" value="IG"/>
    <property type="match status" value="1"/>
</dbReference>
<dbReference type="SMART" id="SM00406">
    <property type="entry name" value="IGv"/>
    <property type="match status" value="1"/>
</dbReference>
<dbReference type="SUPFAM" id="SSF48726">
    <property type="entry name" value="Immunoglobulin"/>
    <property type="match status" value="1"/>
</dbReference>
<dbReference type="PROSITE" id="PS50835">
    <property type="entry name" value="IG_LIKE"/>
    <property type="match status" value="1"/>
</dbReference>
<proteinExistence type="evidence at transcript level"/>
<feature type="chain" id="PRO_0000059770" description="Ig kappa chain V-I region S107A">
    <location>
        <begin position="1"/>
        <end position="114" status="greater than"/>
    </location>
</feature>
<feature type="region of interest" description="Framework-1">
    <location>
        <begin position="1"/>
        <end position="23"/>
    </location>
</feature>
<feature type="region of interest" description="Complementarity-determining-1">
    <location>
        <begin position="24"/>
        <end position="40"/>
    </location>
</feature>
<feature type="region of interest" description="Framework-2">
    <location>
        <begin position="41"/>
        <end position="55"/>
    </location>
</feature>
<feature type="region of interest" description="Complementarity-determining-2">
    <location>
        <begin position="56"/>
        <end position="62"/>
    </location>
</feature>
<feature type="region of interest" description="Framework-3">
    <location>
        <begin position="63"/>
        <end position="94"/>
    </location>
</feature>
<feature type="region of interest" description="Complementarity-determining-3">
    <location>
        <begin position="95"/>
        <end position="103"/>
    </location>
</feature>
<feature type="region of interest" description="Framework-4">
    <location>
        <begin position="104"/>
        <end position="113"/>
    </location>
</feature>
<feature type="disulfide bond" evidence="1">
    <location>
        <begin position="23"/>
        <end position="94"/>
    </location>
</feature>
<feature type="non-terminal residue">
    <location>
        <position position="114"/>
    </location>
</feature>
<name>KV1A1_MOUSE</name>
<organism>
    <name type="scientific">Mus musculus</name>
    <name type="common">Mouse</name>
    <dbReference type="NCBI Taxonomy" id="10090"/>
    <lineage>
        <taxon>Eukaryota</taxon>
        <taxon>Metazoa</taxon>
        <taxon>Chordata</taxon>
        <taxon>Craniata</taxon>
        <taxon>Vertebrata</taxon>
        <taxon>Euteleostomi</taxon>
        <taxon>Mammalia</taxon>
        <taxon>Eutheria</taxon>
        <taxon>Euarchontoglires</taxon>
        <taxon>Glires</taxon>
        <taxon>Rodentia</taxon>
        <taxon>Myomorpha</taxon>
        <taxon>Muroidea</taxon>
        <taxon>Muridae</taxon>
        <taxon>Murinae</taxon>
        <taxon>Mus</taxon>
        <taxon>Mus</taxon>
    </lineage>
</organism>
<reference key="1">
    <citation type="journal article" date="1981" name="J. Exp. Med.">
        <title>Nucleic acid and protein sequences of phosphocholine-binding light chains.</title>
        <authorList>
            <person name="Kwan S.-P."/>
            <person name="Rudikoff S."/>
            <person name="Seidman J.G."/>
            <person name="Leder P."/>
            <person name="Scharff M.D."/>
        </authorList>
    </citation>
    <scope>NUCLEOTIDE SEQUENCE [MRNA]</scope>
</reference>
<reference key="2">
    <citation type="journal article" date="1988" name="J. Immunol.">
        <title>Genetics of the phosphocholine-specific antibody response to Streptococcus pneumoniae. Germ-line but not mutated T15 antibodies are dominantly selected.</title>
        <authorList>
            <person name="Claflin J.L."/>
            <person name="Berry J."/>
        </authorList>
    </citation>
    <scope>NUCLEOTIDE SEQUENCE [MRNA] OF 1-113</scope>
</reference>
<gene>
    <name type="primary">Igkv7-33</name>
</gene>
<sequence length="114" mass="12717">DIVMTQSPTFLAVTASKKVTISCTASESLYSSKHKVHYLAWYQKKPEQSPKLLIYGASNRYIGVPDRFTGSGSGTDFTLTISSVQVEDLTHYYCAQFYSYPLTFGAGTKLELKR</sequence>
<keyword id="KW-1064">Adaptive immunity</keyword>
<keyword id="KW-1015">Disulfide bond</keyword>
<keyword id="KW-0391">Immunity</keyword>
<keyword id="KW-1280">Immunoglobulin</keyword>
<keyword id="KW-1185">Reference proteome</keyword>
<protein>
    <recommendedName>
        <fullName>Ig kappa chain V-I region S107A</fullName>
    </recommendedName>
</protein>